<protein>
    <recommendedName>
        <fullName evidence="6">18S rRNA aminocarboxypropyltransferase</fullName>
        <ecNumber evidence="3">2.5.1.157</ecNumber>
    </recommendedName>
    <alternativeName>
        <fullName evidence="3">20S S rRNA accumulation protein 3 homolog</fullName>
    </alternativeName>
</protein>
<reference key="1">
    <citation type="journal article" date="2005" name="Science">
        <title>The transcriptional landscape of the mammalian genome.</title>
        <authorList>
            <person name="Carninci P."/>
            <person name="Kasukawa T."/>
            <person name="Katayama S."/>
            <person name="Gough J."/>
            <person name="Frith M.C."/>
            <person name="Maeda N."/>
            <person name="Oyama R."/>
            <person name="Ravasi T."/>
            <person name="Lenhard B."/>
            <person name="Wells C."/>
            <person name="Kodzius R."/>
            <person name="Shimokawa K."/>
            <person name="Bajic V.B."/>
            <person name="Brenner S.E."/>
            <person name="Batalov S."/>
            <person name="Forrest A.R."/>
            <person name="Zavolan M."/>
            <person name="Davis M.J."/>
            <person name="Wilming L.G."/>
            <person name="Aidinis V."/>
            <person name="Allen J.E."/>
            <person name="Ambesi-Impiombato A."/>
            <person name="Apweiler R."/>
            <person name="Aturaliya R.N."/>
            <person name="Bailey T.L."/>
            <person name="Bansal M."/>
            <person name="Baxter L."/>
            <person name="Beisel K.W."/>
            <person name="Bersano T."/>
            <person name="Bono H."/>
            <person name="Chalk A.M."/>
            <person name="Chiu K.P."/>
            <person name="Choudhary V."/>
            <person name="Christoffels A."/>
            <person name="Clutterbuck D.R."/>
            <person name="Crowe M.L."/>
            <person name="Dalla E."/>
            <person name="Dalrymple B.P."/>
            <person name="de Bono B."/>
            <person name="Della Gatta G."/>
            <person name="di Bernardo D."/>
            <person name="Down T."/>
            <person name="Engstrom P."/>
            <person name="Fagiolini M."/>
            <person name="Faulkner G."/>
            <person name="Fletcher C.F."/>
            <person name="Fukushima T."/>
            <person name="Furuno M."/>
            <person name="Futaki S."/>
            <person name="Gariboldi M."/>
            <person name="Georgii-Hemming P."/>
            <person name="Gingeras T.R."/>
            <person name="Gojobori T."/>
            <person name="Green R.E."/>
            <person name="Gustincich S."/>
            <person name="Harbers M."/>
            <person name="Hayashi Y."/>
            <person name="Hensch T.K."/>
            <person name="Hirokawa N."/>
            <person name="Hill D."/>
            <person name="Huminiecki L."/>
            <person name="Iacono M."/>
            <person name="Ikeo K."/>
            <person name="Iwama A."/>
            <person name="Ishikawa T."/>
            <person name="Jakt M."/>
            <person name="Kanapin A."/>
            <person name="Katoh M."/>
            <person name="Kawasawa Y."/>
            <person name="Kelso J."/>
            <person name="Kitamura H."/>
            <person name="Kitano H."/>
            <person name="Kollias G."/>
            <person name="Krishnan S.P."/>
            <person name="Kruger A."/>
            <person name="Kummerfeld S.K."/>
            <person name="Kurochkin I.V."/>
            <person name="Lareau L.F."/>
            <person name="Lazarevic D."/>
            <person name="Lipovich L."/>
            <person name="Liu J."/>
            <person name="Liuni S."/>
            <person name="McWilliam S."/>
            <person name="Madan Babu M."/>
            <person name="Madera M."/>
            <person name="Marchionni L."/>
            <person name="Matsuda H."/>
            <person name="Matsuzawa S."/>
            <person name="Miki H."/>
            <person name="Mignone F."/>
            <person name="Miyake S."/>
            <person name="Morris K."/>
            <person name="Mottagui-Tabar S."/>
            <person name="Mulder N."/>
            <person name="Nakano N."/>
            <person name="Nakauchi H."/>
            <person name="Ng P."/>
            <person name="Nilsson R."/>
            <person name="Nishiguchi S."/>
            <person name="Nishikawa S."/>
            <person name="Nori F."/>
            <person name="Ohara O."/>
            <person name="Okazaki Y."/>
            <person name="Orlando V."/>
            <person name="Pang K.C."/>
            <person name="Pavan W.J."/>
            <person name="Pavesi G."/>
            <person name="Pesole G."/>
            <person name="Petrovsky N."/>
            <person name="Piazza S."/>
            <person name="Reed J."/>
            <person name="Reid J.F."/>
            <person name="Ring B.Z."/>
            <person name="Ringwald M."/>
            <person name="Rost B."/>
            <person name="Ruan Y."/>
            <person name="Salzberg S.L."/>
            <person name="Sandelin A."/>
            <person name="Schneider C."/>
            <person name="Schoenbach C."/>
            <person name="Sekiguchi K."/>
            <person name="Semple C.A."/>
            <person name="Seno S."/>
            <person name="Sessa L."/>
            <person name="Sheng Y."/>
            <person name="Shibata Y."/>
            <person name="Shimada H."/>
            <person name="Shimada K."/>
            <person name="Silva D."/>
            <person name="Sinclair B."/>
            <person name="Sperling S."/>
            <person name="Stupka E."/>
            <person name="Sugiura K."/>
            <person name="Sultana R."/>
            <person name="Takenaka Y."/>
            <person name="Taki K."/>
            <person name="Tammoja K."/>
            <person name="Tan S.L."/>
            <person name="Tang S."/>
            <person name="Taylor M.S."/>
            <person name="Tegner J."/>
            <person name="Teichmann S.A."/>
            <person name="Ueda H.R."/>
            <person name="van Nimwegen E."/>
            <person name="Verardo R."/>
            <person name="Wei C.L."/>
            <person name="Yagi K."/>
            <person name="Yamanishi H."/>
            <person name="Zabarovsky E."/>
            <person name="Zhu S."/>
            <person name="Zimmer A."/>
            <person name="Hide W."/>
            <person name="Bult C."/>
            <person name="Grimmond S.M."/>
            <person name="Teasdale R.D."/>
            <person name="Liu E.T."/>
            <person name="Brusic V."/>
            <person name="Quackenbush J."/>
            <person name="Wahlestedt C."/>
            <person name="Mattick J.S."/>
            <person name="Hume D.A."/>
            <person name="Kai C."/>
            <person name="Sasaki D."/>
            <person name="Tomaru Y."/>
            <person name="Fukuda S."/>
            <person name="Kanamori-Katayama M."/>
            <person name="Suzuki M."/>
            <person name="Aoki J."/>
            <person name="Arakawa T."/>
            <person name="Iida J."/>
            <person name="Imamura K."/>
            <person name="Itoh M."/>
            <person name="Kato T."/>
            <person name="Kawaji H."/>
            <person name="Kawagashira N."/>
            <person name="Kawashima T."/>
            <person name="Kojima M."/>
            <person name="Kondo S."/>
            <person name="Konno H."/>
            <person name="Nakano K."/>
            <person name="Ninomiya N."/>
            <person name="Nishio T."/>
            <person name="Okada M."/>
            <person name="Plessy C."/>
            <person name="Shibata K."/>
            <person name="Shiraki T."/>
            <person name="Suzuki S."/>
            <person name="Tagami M."/>
            <person name="Waki K."/>
            <person name="Watahiki A."/>
            <person name="Okamura-Oho Y."/>
            <person name="Suzuki H."/>
            <person name="Kawai J."/>
            <person name="Hayashizaki Y."/>
        </authorList>
    </citation>
    <scope>NUCLEOTIDE SEQUENCE [LARGE SCALE MRNA]</scope>
    <source>
        <strain>C57BL/6J</strain>
        <strain>NOD</strain>
        <tissue>Kidney</tissue>
        <tissue>Visual cortex</tissue>
    </source>
</reference>
<reference key="2">
    <citation type="journal article" date="2004" name="Genome Res.">
        <title>The status, quality, and expansion of the NIH full-length cDNA project: the Mammalian Gene Collection (MGC).</title>
        <authorList>
            <consortium name="The MGC Project Team"/>
        </authorList>
    </citation>
    <scope>NUCLEOTIDE SEQUENCE [LARGE SCALE MRNA]</scope>
    <source>
        <strain>C57BL/6J</strain>
        <tissue>Eye</tissue>
    </source>
</reference>
<reference key="3">
    <citation type="journal article" date="2010" name="Cell">
        <title>A tissue-specific atlas of mouse protein phosphorylation and expression.</title>
        <authorList>
            <person name="Huttlin E.L."/>
            <person name="Jedrychowski M.P."/>
            <person name="Elias J.E."/>
            <person name="Goswami T."/>
            <person name="Rad R."/>
            <person name="Beausoleil S.A."/>
            <person name="Villen J."/>
            <person name="Haas W."/>
            <person name="Sowa M.E."/>
            <person name="Gygi S.P."/>
        </authorList>
    </citation>
    <scope>PHOSPHORYLATION [LARGE SCALE ANALYSIS] AT SER-24</scope>
    <scope>IDENTIFICATION BY MASS SPECTROMETRY [LARGE SCALE ANALYSIS]</scope>
    <source>
        <tissue>Brain</tissue>
        <tissue>Lung</tissue>
        <tissue>Pancreas</tissue>
        <tissue>Spleen</tissue>
        <tissue>Testis</tissue>
    </source>
</reference>
<organism>
    <name type="scientific">Mus musculus</name>
    <name type="common">Mouse</name>
    <dbReference type="NCBI Taxonomy" id="10090"/>
    <lineage>
        <taxon>Eukaryota</taxon>
        <taxon>Metazoa</taxon>
        <taxon>Chordata</taxon>
        <taxon>Craniata</taxon>
        <taxon>Vertebrata</taxon>
        <taxon>Euteleostomi</taxon>
        <taxon>Mammalia</taxon>
        <taxon>Eutheria</taxon>
        <taxon>Euarchontoglires</taxon>
        <taxon>Glires</taxon>
        <taxon>Rodentia</taxon>
        <taxon>Myomorpha</taxon>
        <taxon>Muroidea</taxon>
        <taxon>Muridae</taxon>
        <taxon>Murinae</taxon>
        <taxon>Mus</taxon>
        <taxon>Mus</taxon>
    </lineage>
</organism>
<dbReference type="EC" id="2.5.1.157" evidence="3"/>
<dbReference type="EMBL" id="AK002309">
    <property type="protein sequence ID" value="BAB22003.1"/>
    <property type="molecule type" value="mRNA"/>
</dbReference>
<dbReference type="EMBL" id="AK158743">
    <property type="protein sequence ID" value="BAE34637.1"/>
    <property type="molecule type" value="mRNA"/>
</dbReference>
<dbReference type="EMBL" id="AK170074">
    <property type="protein sequence ID" value="BAE41547.1"/>
    <property type="molecule type" value="mRNA"/>
</dbReference>
<dbReference type="EMBL" id="BC089019">
    <property type="protein sequence ID" value="AAH89019.1"/>
    <property type="molecule type" value="mRNA"/>
</dbReference>
<dbReference type="CCDS" id="CCDS28512.1"/>
<dbReference type="RefSeq" id="NP_001157190.1">
    <property type="nucleotide sequence ID" value="NM_001163718.1"/>
</dbReference>
<dbReference type="RefSeq" id="NP_080952.2">
    <property type="nucleotide sequence ID" value="NM_026676.3"/>
</dbReference>
<dbReference type="SMR" id="Q5HZH2"/>
<dbReference type="FunCoup" id="Q5HZH2">
    <property type="interactions" value="201"/>
</dbReference>
<dbReference type="STRING" id="10090.ENSMUSP00000068511"/>
<dbReference type="iPTMnet" id="Q5HZH2"/>
<dbReference type="PhosphoSitePlus" id="Q5HZH2"/>
<dbReference type="PaxDb" id="10090-ENSMUSP00000068511"/>
<dbReference type="PeptideAtlas" id="Q5HZH2"/>
<dbReference type="ProteomicsDB" id="298148"/>
<dbReference type="Pumba" id="Q5HZH2"/>
<dbReference type="Antibodypedia" id="52454">
    <property type="antibodies" value="21 antibodies from 10 providers"/>
</dbReference>
<dbReference type="DNASU" id="68327"/>
<dbReference type="Ensembl" id="ENSMUST00000063574.8">
    <property type="protein sequence ID" value="ENSMUSP00000068511.7"/>
    <property type="gene ID" value="ENSMUSG00000015126.11"/>
</dbReference>
<dbReference type="GeneID" id="68327"/>
<dbReference type="KEGG" id="mmu:68327"/>
<dbReference type="UCSC" id="uc008baf.2">
    <property type="organism name" value="mouse"/>
</dbReference>
<dbReference type="AGR" id="MGI:1915577"/>
<dbReference type="CTD" id="115939"/>
<dbReference type="MGI" id="MGI:1915577">
    <property type="gene designation" value="Tsr3"/>
</dbReference>
<dbReference type="VEuPathDB" id="HostDB:ENSMUSG00000015126"/>
<dbReference type="eggNOG" id="KOG3154">
    <property type="taxonomic scope" value="Eukaryota"/>
</dbReference>
<dbReference type="GeneTree" id="ENSGT00390000014665"/>
<dbReference type="HOGENOM" id="CLU_035060_2_0_1"/>
<dbReference type="InParanoid" id="Q5HZH2"/>
<dbReference type="OMA" id="MVGTHPR"/>
<dbReference type="OrthoDB" id="10262062at2759"/>
<dbReference type="PhylomeDB" id="Q5HZH2"/>
<dbReference type="TreeFam" id="TF105862"/>
<dbReference type="BioGRID-ORCS" id="68327">
    <property type="hits" value="4 hits in 76 CRISPR screens"/>
</dbReference>
<dbReference type="ChiTaRS" id="Tsr3">
    <property type="organism name" value="mouse"/>
</dbReference>
<dbReference type="PRO" id="PR:Q5HZH2"/>
<dbReference type="Proteomes" id="UP000000589">
    <property type="component" value="Chromosome 17"/>
</dbReference>
<dbReference type="RNAct" id="Q5HZH2">
    <property type="molecule type" value="protein"/>
</dbReference>
<dbReference type="Bgee" id="ENSMUSG00000015126">
    <property type="expression patterns" value="Expressed in floor plate of midbrain and 245 other cell types or tissues"/>
</dbReference>
<dbReference type="GO" id="GO:0005737">
    <property type="term" value="C:cytoplasm"/>
    <property type="evidence" value="ECO:0007669"/>
    <property type="project" value="UniProtKB-SubCell"/>
</dbReference>
<dbReference type="GO" id="GO:0106388">
    <property type="term" value="F:18S rRNA aminocarboxypropyltransferase activity"/>
    <property type="evidence" value="ECO:0007669"/>
    <property type="project" value="InterPro"/>
</dbReference>
<dbReference type="GO" id="GO:1904047">
    <property type="term" value="F:S-adenosyl-L-methionine binding"/>
    <property type="evidence" value="ECO:0007669"/>
    <property type="project" value="UniProtKB-UniRule"/>
</dbReference>
<dbReference type="GO" id="GO:0000455">
    <property type="term" value="P:enzyme-directed rRNA pseudouridine synthesis"/>
    <property type="evidence" value="ECO:0007669"/>
    <property type="project" value="UniProtKB-UniRule"/>
</dbReference>
<dbReference type="HAMAP" id="MF_01116">
    <property type="entry name" value="TSR3"/>
    <property type="match status" value="1"/>
</dbReference>
<dbReference type="InterPro" id="IPR007209">
    <property type="entry name" value="RNaseL-inhib-like_metal-bd_dom"/>
</dbReference>
<dbReference type="InterPro" id="IPR022968">
    <property type="entry name" value="Tsr3-like"/>
</dbReference>
<dbReference type="InterPro" id="IPR007177">
    <property type="entry name" value="Tsr3_C"/>
</dbReference>
<dbReference type="NCBIfam" id="NF002621">
    <property type="entry name" value="PRK02287.1"/>
    <property type="match status" value="1"/>
</dbReference>
<dbReference type="PANTHER" id="PTHR20426:SF0">
    <property type="entry name" value="18S RRNA AMINOCARBOXYPROPYLTRANSFERASE"/>
    <property type="match status" value="1"/>
</dbReference>
<dbReference type="PANTHER" id="PTHR20426">
    <property type="entry name" value="RIBOSOME BIOGENESIS PROTEIN TSR3 HOMOLOG"/>
    <property type="match status" value="1"/>
</dbReference>
<dbReference type="Pfam" id="PF04068">
    <property type="entry name" value="Fer4_RLI"/>
    <property type="match status" value="1"/>
</dbReference>
<dbReference type="Pfam" id="PF04034">
    <property type="entry name" value="Ribo_biogen_C"/>
    <property type="match status" value="1"/>
</dbReference>
<comment type="function">
    <text evidence="3">Aminocarboxypropyltransferase that catalyzes the aminocarboxypropyl transfer on pseudouridine at position 1248 (Psi1248) in 18S rRNA. It constitutes the last step in biosynthesis of the hypermodified N1-methyl-N3-(3-amino-3-carboxypropyl) pseudouridine (m1acp3-Psi) conserved in eukaryotic 18S rRNA.</text>
</comment>
<comment type="catalytic activity">
    <reaction evidence="3 4">
        <text>an N(1)-methylpseudouridine in rRNA + S-adenosyl-L-methionine = N(1)-methyl-N(3)-[(3S)-3-amino-3-carboxypropyl]pseudouridine in rRNA + S-methyl-5'-thioadenosine + H(+)</text>
        <dbReference type="Rhea" id="RHEA:63296"/>
        <dbReference type="Rhea" id="RHEA-COMP:11634"/>
        <dbReference type="Rhea" id="RHEA-COMP:16310"/>
        <dbReference type="ChEBI" id="CHEBI:15378"/>
        <dbReference type="ChEBI" id="CHEBI:17509"/>
        <dbReference type="ChEBI" id="CHEBI:59789"/>
        <dbReference type="ChEBI" id="CHEBI:74890"/>
        <dbReference type="ChEBI" id="CHEBI:146234"/>
        <dbReference type="EC" id="2.5.1.157"/>
    </reaction>
    <physiologicalReaction direction="left-to-right" evidence="3 4">
        <dbReference type="Rhea" id="RHEA:63297"/>
    </physiologicalReaction>
</comment>
<comment type="catalytic activity">
    <reaction evidence="3 4">
        <text>N(1)-methylpseudouridine(1248) in human 18S rRNA + S-adenosyl-L-methionine = N(1)-methyl-N(3)-[(3S)-3-amino-3-carboxypropyl]pseudouridine(1248) in human 18S rRNA + S-methyl-5'-thioadenosine + H(+)</text>
        <dbReference type="Rhea" id="RHEA:63292"/>
        <dbReference type="Rhea" id="RHEA-COMP:11639"/>
        <dbReference type="Rhea" id="RHEA-COMP:16308"/>
        <dbReference type="ChEBI" id="CHEBI:15378"/>
        <dbReference type="ChEBI" id="CHEBI:17509"/>
        <dbReference type="ChEBI" id="CHEBI:59789"/>
        <dbReference type="ChEBI" id="CHEBI:74890"/>
        <dbReference type="ChEBI" id="CHEBI:146234"/>
    </reaction>
    <physiologicalReaction direction="left-to-right" evidence="3 4">
        <dbReference type="Rhea" id="RHEA:63293"/>
    </physiologicalReaction>
</comment>
<comment type="subcellular location">
    <subcellularLocation>
        <location evidence="2 4">Cytoplasm</location>
    </subcellularLocation>
</comment>
<comment type="similarity">
    <text evidence="4">Belongs to the TDD superfamily. TSR3 family.</text>
</comment>
<proteinExistence type="evidence at protein level"/>
<name>TSR3_MOUSE</name>
<sequence>MGRKKVARGSRKESGRVRRPSGRSLDAFAEEVGAALRASVQPEEAEDQGGPGPAALPCALAMWELGHCDPKRCTGRKLARLGLVRCLRLSQRFGGLVLSPVGTEYVSPADRQLVAQSGVAVIDCSWAKLDDTPFQKMRGSHLRLLPYLVAANPVNYGRPCKLSCVEAFAAAFCIVGFSDLAVILLRKFKWGKGFLDLNRELLDKYAACRGPEEVLQAEQGYLASTRDTPEEDIDPFDVDSGREFVNLNRPVASTRLPEDMDDTDGSEEHSEDSEEDSDECEEPGPGANGGDSNYSGAEETPEQEAQARDSTEIWKGIKKRQRD</sequence>
<gene>
    <name evidence="7" type="primary">Tsr3</name>
</gene>
<accession>Q5HZH2</accession>
<accession>Q9DD00</accession>
<evidence type="ECO:0000250" key="1">
    <source>
        <dbReference type="UniProtKB" id="E1QU22"/>
    </source>
</evidence>
<evidence type="ECO:0000250" key="2">
    <source>
        <dbReference type="UniProtKB" id="Q12094"/>
    </source>
</evidence>
<evidence type="ECO:0000250" key="3">
    <source>
        <dbReference type="UniProtKB" id="Q9UJK0"/>
    </source>
</evidence>
<evidence type="ECO:0000255" key="4">
    <source>
        <dbReference type="HAMAP-Rule" id="MF_03146"/>
    </source>
</evidence>
<evidence type="ECO:0000256" key="5">
    <source>
        <dbReference type="SAM" id="MobiDB-lite"/>
    </source>
</evidence>
<evidence type="ECO:0000305" key="6"/>
<evidence type="ECO:0000312" key="7">
    <source>
        <dbReference type="MGI" id="MGI:1915577"/>
    </source>
</evidence>
<evidence type="ECO:0007744" key="8">
    <source>
    </source>
</evidence>
<feature type="chain" id="PRO_0000278670" description="18S rRNA aminocarboxypropyltransferase">
    <location>
        <begin position="1"/>
        <end position="323"/>
    </location>
</feature>
<feature type="region of interest" description="Disordered" evidence="5">
    <location>
        <begin position="1"/>
        <end position="25"/>
    </location>
</feature>
<feature type="region of interest" description="Disordered" evidence="5">
    <location>
        <begin position="247"/>
        <end position="323"/>
    </location>
</feature>
<feature type="compositionally biased region" description="Acidic residues" evidence="5">
    <location>
        <begin position="259"/>
        <end position="282"/>
    </location>
</feature>
<feature type="binding site" evidence="1">
    <location>
        <position position="74"/>
    </location>
    <ligand>
        <name>S-adenosyl-L-methionine</name>
        <dbReference type="ChEBI" id="CHEBI:59789"/>
    </ligand>
</feature>
<feature type="binding site" evidence="1">
    <location>
        <position position="122"/>
    </location>
    <ligand>
        <name>S-adenosyl-L-methionine</name>
        <dbReference type="ChEBI" id="CHEBI:59789"/>
    </ligand>
</feature>
<feature type="binding site" evidence="1">
    <location>
        <position position="145"/>
    </location>
    <ligand>
        <name>S-adenosyl-L-methionine</name>
        <dbReference type="ChEBI" id="CHEBI:59789"/>
    </ligand>
</feature>
<feature type="modified residue" description="Phosphoserine" evidence="8">
    <location>
        <position position="24"/>
    </location>
</feature>
<feature type="sequence conflict" description="In Ref. 1; BAB22003." evidence="6" ref="1">
    <original>V</original>
    <variation>E</variation>
    <location>
        <position position="245"/>
    </location>
</feature>
<keyword id="KW-0963">Cytoplasm</keyword>
<keyword id="KW-0597">Phosphoprotein</keyword>
<keyword id="KW-1185">Reference proteome</keyword>
<keyword id="KW-0690">Ribosome biogenesis</keyword>
<keyword id="KW-0698">rRNA processing</keyword>
<keyword id="KW-0949">S-adenosyl-L-methionine</keyword>
<keyword id="KW-0808">Transferase</keyword>